<name>MSRA_BACVZ</name>
<comment type="function">
    <text evidence="1">Has an important function as a repair enzyme for proteins that have been inactivated by oxidation. Catalyzes the reversible oxidation-reduction of methionine sulfoxide in proteins to methionine.</text>
</comment>
<comment type="catalytic activity">
    <reaction evidence="1">
        <text>L-methionyl-[protein] + [thioredoxin]-disulfide + H2O = L-methionyl-(S)-S-oxide-[protein] + [thioredoxin]-dithiol</text>
        <dbReference type="Rhea" id="RHEA:14217"/>
        <dbReference type="Rhea" id="RHEA-COMP:10698"/>
        <dbReference type="Rhea" id="RHEA-COMP:10700"/>
        <dbReference type="Rhea" id="RHEA-COMP:12313"/>
        <dbReference type="Rhea" id="RHEA-COMP:12315"/>
        <dbReference type="ChEBI" id="CHEBI:15377"/>
        <dbReference type="ChEBI" id="CHEBI:16044"/>
        <dbReference type="ChEBI" id="CHEBI:29950"/>
        <dbReference type="ChEBI" id="CHEBI:44120"/>
        <dbReference type="ChEBI" id="CHEBI:50058"/>
        <dbReference type="EC" id="1.8.4.11"/>
    </reaction>
</comment>
<comment type="catalytic activity">
    <reaction evidence="1">
        <text>[thioredoxin]-disulfide + L-methionine + H2O = L-methionine (S)-S-oxide + [thioredoxin]-dithiol</text>
        <dbReference type="Rhea" id="RHEA:19993"/>
        <dbReference type="Rhea" id="RHEA-COMP:10698"/>
        <dbReference type="Rhea" id="RHEA-COMP:10700"/>
        <dbReference type="ChEBI" id="CHEBI:15377"/>
        <dbReference type="ChEBI" id="CHEBI:29950"/>
        <dbReference type="ChEBI" id="CHEBI:50058"/>
        <dbReference type="ChEBI" id="CHEBI:57844"/>
        <dbReference type="ChEBI" id="CHEBI:58772"/>
        <dbReference type="EC" id="1.8.4.11"/>
    </reaction>
</comment>
<comment type="similarity">
    <text evidence="1">Belongs to the MsrA Met sulfoxide reductase family.</text>
</comment>
<reference key="1">
    <citation type="journal article" date="2007" name="Nat. Biotechnol.">
        <title>Comparative analysis of the complete genome sequence of the plant growth-promoting bacterium Bacillus amyloliquefaciens FZB42.</title>
        <authorList>
            <person name="Chen X.H."/>
            <person name="Koumoutsi A."/>
            <person name="Scholz R."/>
            <person name="Eisenreich A."/>
            <person name="Schneider K."/>
            <person name="Heinemeyer I."/>
            <person name="Morgenstern B."/>
            <person name="Voss B."/>
            <person name="Hess W.R."/>
            <person name="Reva O."/>
            <person name="Junge H."/>
            <person name="Voigt B."/>
            <person name="Jungblut P.R."/>
            <person name="Vater J."/>
            <person name="Suessmuth R."/>
            <person name="Liesegang H."/>
            <person name="Strittmatter A."/>
            <person name="Gottschalk G."/>
            <person name="Borriss R."/>
        </authorList>
    </citation>
    <scope>NUCLEOTIDE SEQUENCE [LARGE SCALE GENOMIC DNA]</scope>
    <source>
        <strain>DSM 23117 / BGSC 10A6 / LMG 26770 / FZB42</strain>
    </source>
</reference>
<accession>A7Z5S2</accession>
<keyword id="KW-0560">Oxidoreductase</keyword>
<feature type="chain" id="PRO_1000068309" description="Peptide methionine sulfoxide reductase MsrA">
    <location>
        <begin position="1"/>
        <end position="177"/>
    </location>
</feature>
<feature type="active site" evidence="1">
    <location>
        <position position="14"/>
    </location>
</feature>
<evidence type="ECO:0000255" key="1">
    <source>
        <dbReference type="HAMAP-Rule" id="MF_01401"/>
    </source>
</evidence>
<protein>
    <recommendedName>
        <fullName evidence="1">Peptide methionine sulfoxide reductase MsrA</fullName>
        <shortName evidence="1">Protein-methionine-S-oxide reductase</shortName>
        <ecNumber evidence="1">1.8.4.11</ecNumber>
    </recommendedName>
    <alternativeName>
        <fullName evidence="1">Peptide-methionine (S)-S-oxide reductase</fullName>
        <shortName evidence="1">Peptide Met(O) reductase</shortName>
    </alternativeName>
</protein>
<organism>
    <name type="scientific">Bacillus velezensis (strain DSM 23117 / BGSC 10A6 / LMG 26770 / FZB42)</name>
    <name type="common">Bacillus amyloliquefaciens subsp. plantarum</name>
    <dbReference type="NCBI Taxonomy" id="326423"/>
    <lineage>
        <taxon>Bacteria</taxon>
        <taxon>Bacillati</taxon>
        <taxon>Bacillota</taxon>
        <taxon>Bacilli</taxon>
        <taxon>Bacillales</taxon>
        <taxon>Bacillaceae</taxon>
        <taxon>Bacillus</taxon>
        <taxon>Bacillus amyloliquefaciens group</taxon>
    </lineage>
</organism>
<gene>
    <name evidence="1" type="primary">msrA</name>
    <name type="ordered locus">RBAM_019860</name>
</gene>
<sequence length="177" mass="20476">MSEKKEIATFAGGCFWCMVKPFDEQPGIEKVVSGYTGGHTENPTYEEVCSETTGHREAVQITFQPDIYPYEKLVELFWQQIDPTDAGGQFADRGSSYRAAIYYHNDEQKQIAEASKKQLEESGIFKKPIVTDILKAEPFYEAEGYHQHFYKKNPDHYGRYRVGSGRQGFLDEHWRDR</sequence>
<dbReference type="EC" id="1.8.4.11" evidence="1"/>
<dbReference type="EMBL" id="CP000560">
    <property type="protein sequence ID" value="ABS74348.1"/>
    <property type="molecule type" value="Genomic_DNA"/>
</dbReference>
<dbReference type="RefSeq" id="WP_003153641.1">
    <property type="nucleotide sequence ID" value="NC_009725.2"/>
</dbReference>
<dbReference type="SMR" id="A7Z5S2"/>
<dbReference type="GeneID" id="93081115"/>
<dbReference type="KEGG" id="bay:RBAM_019860"/>
<dbReference type="HOGENOM" id="CLU_031040_10_1_9"/>
<dbReference type="Proteomes" id="UP000001120">
    <property type="component" value="Chromosome"/>
</dbReference>
<dbReference type="GO" id="GO:0033744">
    <property type="term" value="F:L-methionine:thioredoxin-disulfide S-oxidoreductase activity"/>
    <property type="evidence" value="ECO:0007669"/>
    <property type="project" value="RHEA"/>
</dbReference>
<dbReference type="GO" id="GO:0008113">
    <property type="term" value="F:peptide-methionine (S)-S-oxide reductase activity"/>
    <property type="evidence" value="ECO:0007669"/>
    <property type="project" value="UniProtKB-UniRule"/>
</dbReference>
<dbReference type="GO" id="GO:0036211">
    <property type="term" value="P:protein modification process"/>
    <property type="evidence" value="ECO:0007669"/>
    <property type="project" value="UniProtKB-UniRule"/>
</dbReference>
<dbReference type="FunFam" id="3.30.1060.10:FF:000003">
    <property type="entry name" value="Peptide methionine sulfoxide reductase MsrA"/>
    <property type="match status" value="1"/>
</dbReference>
<dbReference type="Gene3D" id="3.30.1060.10">
    <property type="entry name" value="Peptide methionine sulphoxide reductase MsrA"/>
    <property type="match status" value="1"/>
</dbReference>
<dbReference type="HAMAP" id="MF_01401">
    <property type="entry name" value="MsrA"/>
    <property type="match status" value="1"/>
</dbReference>
<dbReference type="InterPro" id="IPR002569">
    <property type="entry name" value="Met_Sox_Rdtase_MsrA_dom"/>
</dbReference>
<dbReference type="InterPro" id="IPR036509">
    <property type="entry name" value="Met_Sox_Rdtase_MsrA_sf"/>
</dbReference>
<dbReference type="NCBIfam" id="TIGR00401">
    <property type="entry name" value="msrA"/>
    <property type="match status" value="1"/>
</dbReference>
<dbReference type="PANTHER" id="PTHR43774">
    <property type="entry name" value="PEPTIDE METHIONINE SULFOXIDE REDUCTASE"/>
    <property type="match status" value="1"/>
</dbReference>
<dbReference type="PANTHER" id="PTHR43774:SF1">
    <property type="entry name" value="PEPTIDE METHIONINE SULFOXIDE REDUCTASE MSRA 2"/>
    <property type="match status" value="1"/>
</dbReference>
<dbReference type="Pfam" id="PF01625">
    <property type="entry name" value="PMSR"/>
    <property type="match status" value="1"/>
</dbReference>
<dbReference type="SUPFAM" id="SSF55068">
    <property type="entry name" value="Peptide methionine sulfoxide reductase"/>
    <property type="match status" value="1"/>
</dbReference>
<proteinExistence type="inferred from homology"/>